<sequence>MKVARFQKIPNVENETMIPVLTSKRASELAVSEVAGLLQADLQNGLNKSEVSHRRAFHGWNEFDISEDEPLWKKYISQFKNPLIMLLLASAVISILMRQFDDAVSITVAIVIVVTVAFVQEYRSEKSLEELSKLVPPECHCVREGKLEHTLARDLVPGDTVCLSVGDRVPADLRLFEAVDLSVDESSLTGETAPCSKVTAPQPAANGDLASRSNIAFMGTLVRCGKAKGIVIGTGENSEFGEVFKMMQAEEAPKTPLQKSMDLLGKQLSFYSFGIIGIIMLVGWLLGKDILEMFTISVSLAVAAIPEGLPIVVTVTLALGVMRMVKKRAIVKKLPIVETLGCCNVICSDKTGTLTKNEMTVTHILTSDGLHAEVTGVGYNQFGEVIVDGDVVHGFYNPAVSRIVEAGCVCNDAVIRNNTLMGKPTEGALIALAMKMGLDGLQQDYIRKAEYPFSSEQKWMAVKCVHRTQQDRPEICFMKGAYEQVIKYCTTYNSKGQTLALTQQQRDLYQQEKARMGSAGLRVLALASGPELGQLTFLGLVGIIDPPRTGVKEAVTTLIASGVSIKMITGDSQETAIAIASRLGLYSKTSQSVSGEEVDTMEVQHLSQIVPKVAVFYRASPRHKMKIIKSLQKNGAVVAMTGDGVNDAVALKAADIGVAMGQTGTDVCKEAADMILVDDDFQTIMSAIEEGKGIYNNIKNFVRFQLSTSIAALTLISLATLMNFPNPLNAMQILWINIIMDGPPAQSLGVEPVDKDVIRKPPRNWKDSILTKNLILKILVSSIIIVCGTLFVFWRELRDNVITPRDTTMTFTCFVFFDMFNALSSRSQTKSVFEIGLCSNKMFCYAVLGSIMGQLLVIYFPPLQKVFQTESLSILDLLFLLGLTSSVCIVSEIIKKVERSREKVQKNAGSASSSFLEV</sequence>
<evidence type="ECO:0000250" key="1"/>
<evidence type="ECO:0000250" key="2">
    <source>
        <dbReference type="UniProtKB" id="P98194"/>
    </source>
</evidence>
<evidence type="ECO:0000255" key="3"/>
<evidence type="ECO:0000269" key="4">
    <source>
    </source>
</evidence>
<evidence type="ECO:0000269" key="5">
    <source>
    </source>
</evidence>
<evidence type="ECO:0000303" key="6">
    <source>
    </source>
</evidence>
<evidence type="ECO:0000305" key="7"/>
<evidence type="ECO:0000312" key="8">
    <source>
        <dbReference type="MGI" id="MGI:1889008"/>
    </source>
</evidence>
<reference key="1">
    <citation type="journal article" date="2004" name="Diabetes">
        <title>Role for plasma membrane-related Ca2+-ATPase-1 (ATP2C1) in pancreatic beta-cell Ca2+ homeostasis revealed by RNA silencing.</title>
        <authorList>
            <person name="Mitchell K.J."/>
            <person name="Tsuboi T."/>
            <person name="Rutter G.A."/>
        </authorList>
    </citation>
    <scope>NUCLEOTIDE SEQUENCE [MRNA]</scope>
    <scope>FUNCTION</scope>
    <scope>SUBCELLULAR LOCATION</scope>
</reference>
<reference key="2">
    <citation type="journal article" date="2009" name="PLoS Biol.">
        <title>Lineage-specific biology revealed by a finished genome assembly of the mouse.</title>
        <authorList>
            <person name="Church D.M."/>
            <person name="Goodstadt L."/>
            <person name="Hillier L.W."/>
            <person name="Zody M.C."/>
            <person name="Goldstein S."/>
            <person name="She X."/>
            <person name="Bult C.J."/>
            <person name="Agarwala R."/>
            <person name="Cherry J.L."/>
            <person name="DiCuccio M."/>
            <person name="Hlavina W."/>
            <person name="Kapustin Y."/>
            <person name="Meric P."/>
            <person name="Maglott D."/>
            <person name="Birtle Z."/>
            <person name="Marques A.C."/>
            <person name="Graves T."/>
            <person name="Zhou S."/>
            <person name="Teague B."/>
            <person name="Potamousis K."/>
            <person name="Churas C."/>
            <person name="Place M."/>
            <person name="Herschleb J."/>
            <person name="Runnheim R."/>
            <person name="Forrest D."/>
            <person name="Amos-Landgraf J."/>
            <person name="Schwartz D.C."/>
            <person name="Cheng Z."/>
            <person name="Lindblad-Toh K."/>
            <person name="Eichler E.E."/>
            <person name="Ponting C.P."/>
        </authorList>
    </citation>
    <scope>NUCLEOTIDE SEQUENCE [LARGE SCALE GENOMIC DNA]</scope>
    <source>
        <strain>C57BL/6J</strain>
    </source>
</reference>
<reference key="3">
    <citation type="journal article" date="2004" name="Genome Res.">
        <title>The status, quality, and expansion of the NIH full-length cDNA project: the Mammalian Gene Collection (MGC).</title>
        <authorList>
            <consortium name="The MGC Project Team"/>
        </authorList>
    </citation>
    <scope>NUCLEOTIDE SEQUENCE [LARGE SCALE MRNA]</scope>
    <source>
        <strain>C57BL/6J</strain>
        <tissue>Brain</tissue>
    </source>
</reference>
<reference key="4">
    <citation type="submission" date="2009-01" db="UniProtKB">
        <authorList>
            <person name="Lubec G."/>
            <person name="Sunyer B."/>
            <person name="Chen W.-Q."/>
        </authorList>
    </citation>
    <scope>PROTEIN SEQUENCE OF 127-133</scope>
    <scope>IDENTIFICATION BY MASS SPECTROMETRY</scope>
    <source>
        <strain>OF1</strain>
        <tissue>Hippocampus</tissue>
    </source>
</reference>
<reference key="5">
    <citation type="journal article" date="2007" name="J. Biol. Chem.">
        <title>Loss of the Atp2c1 secretory pathway Ca(2+)-ATPase (SPCA1) in mice causes Golgi stress, apoptosis, and midgestational death in homozygous embryos and squamous cell tumors in adult heterozygotes.</title>
        <authorList>
            <person name="Okunade G.W."/>
            <person name="Miller M.L."/>
            <person name="Azhar M."/>
            <person name="Andringa A."/>
            <person name="Sanford L.P."/>
            <person name="Doetschman T."/>
            <person name="Prasad V."/>
            <person name="Shull G.E."/>
        </authorList>
    </citation>
    <scope>DISRUPTION PHENOTYPE</scope>
    <scope>TISSUE SPECIFICITY</scope>
</reference>
<reference key="6">
    <citation type="journal article" date="2009" name="J. Neurosci.">
        <title>Silencing the SPCA1 (secretory pathway Ca2+-ATPase isoform 1) impairs Ca2+ homeostasis in the Golgi and disturbs neural polarity.</title>
        <authorList>
            <person name="Sepulveda M.R."/>
            <person name="Vanoevelen J."/>
            <person name="Raeymaekers L."/>
            <person name="Mata A.M."/>
            <person name="Wuytack F."/>
        </authorList>
    </citation>
    <scope>FUNCTION</scope>
    <scope>SUBCELLULAR LOCATION</scope>
    <scope>TISSUE SPECIFICITY</scope>
</reference>
<reference key="7">
    <citation type="journal article" date="2010" name="Cell">
        <title>A tissue-specific atlas of mouse protein phosphorylation and expression.</title>
        <authorList>
            <person name="Huttlin E.L."/>
            <person name="Jedrychowski M.P."/>
            <person name="Elias J.E."/>
            <person name="Goswami T."/>
            <person name="Rad R."/>
            <person name="Beausoleil S.A."/>
            <person name="Villen J."/>
            <person name="Haas W."/>
            <person name="Sowa M.E."/>
            <person name="Gygi S.P."/>
        </authorList>
    </citation>
    <scope>IDENTIFICATION BY MASS SPECTROMETRY [LARGE SCALE ANALYSIS]</scope>
    <source>
        <tissue>Heart</tissue>
        <tissue>Kidney</tissue>
        <tissue>Spleen</tissue>
    </source>
</reference>
<accession>Q80XR2</accession>
<accession>E9QMB9</accession>
<accession>Q80YZ2</accession>
<protein>
    <recommendedName>
        <fullName>Calcium-transporting ATPase type 2C member 1</fullName>
        <shortName>ATPase 2C1</shortName>
        <ecNumber evidence="2">7.2.2.10</ecNumber>
    </recommendedName>
    <alternativeName>
        <fullName>ATP-dependent Ca(2+) pump PMR1</fullName>
    </alternativeName>
    <alternativeName>
        <fullName evidence="2">Ca(2+)/Mn(2+)-ATPase 2C1</fullName>
    </alternativeName>
    <alternativeName>
        <fullName>Secretory pathway Ca(2+)-transporting ATPase type 1</fullName>
        <shortName evidence="6">SPCA1</shortName>
    </alternativeName>
</protein>
<name>AT2C1_MOUSE</name>
<dbReference type="EC" id="7.2.2.10" evidence="2"/>
<dbReference type="EMBL" id="AJ551270">
    <property type="protein sequence ID" value="CAD82864.1"/>
    <property type="molecule type" value="mRNA"/>
</dbReference>
<dbReference type="EMBL" id="AC113016">
    <property type="status" value="NOT_ANNOTATED_CDS"/>
    <property type="molecule type" value="Genomic_DNA"/>
</dbReference>
<dbReference type="EMBL" id="AC117679">
    <property type="status" value="NOT_ANNOTATED_CDS"/>
    <property type="molecule type" value="Genomic_DNA"/>
</dbReference>
<dbReference type="EMBL" id="BC043091">
    <property type="protein sequence ID" value="AAH43091.1"/>
    <property type="molecule type" value="mRNA"/>
</dbReference>
<dbReference type="CCDS" id="CCDS40752.1"/>
<dbReference type="RefSeq" id="NP_001240760.1">
    <property type="nucleotide sequence ID" value="NM_001253831.1"/>
</dbReference>
<dbReference type="RefSeq" id="NP_001240763.1">
    <property type="nucleotide sequence ID" value="NM_001253834.1"/>
</dbReference>
<dbReference type="RefSeq" id="NP_778190.3">
    <property type="nucleotide sequence ID" value="NM_175025.4"/>
</dbReference>
<dbReference type="SMR" id="Q80XR2"/>
<dbReference type="BioGRID" id="231683">
    <property type="interactions" value="6"/>
</dbReference>
<dbReference type="FunCoup" id="Q80XR2">
    <property type="interactions" value="2743"/>
</dbReference>
<dbReference type="STRING" id="10090.ENSMUSP00000082220"/>
<dbReference type="GlyGen" id="Q80XR2">
    <property type="glycosylation" value="2 sites, 2 N-linked glycans (2 sites)"/>
</dbReference>
<dbReference type="iPTMnet" id="Q80XR2"/>
<dbReference type="PhosphoSitePlus" id="Q80XR2"/>
<dbReference type="SwissPalm" id="Q80XR2"/>
<dbReference type="jPOST" id="Q80XR2"/>
<dbReference type="PaxDb" id="10090-ENSMUSP00000039103"/>
<dbReference type="ProteomicsDB" id="277125"/>
<dbReference type="Pumba" id="Q80XR2"/>
<dbReference type="Antibodypedia" id="4128">
    <property type="antibodies" value="342 antibodies from 33 providers"/>
</dbReference>
<dbReference type="DNASU" id="235574"/>
<dbReference type="Ensembl" id="ENSMUST00000038118.15">
    <property type="protein sequence ID" value="ENSMUSP00000039103.8"/>
    <property type="gene ID" value="ENSMUSG00000032570.18"/>
</dbReference>
<dbReference type="Ensembl" id="ENSMUST00000112558.10">
    <property type="protein sequence ID" value="ENSMUSP00000108177.3"/>
    <property type="gene ID" value="ENSMUSG00000032570.18"/>
</dbReference>
<dbReference type="GeneID" id="235574"/>
<dbReference type="KEGG" id="mmu:235574"/>
<dbReference type="UCSC" id="uc009rif.3">
    <property type="organism name" value="mouse"/>
</dbReference>
<dbReference type="AGR" id="MGI:1889008"/>
<dbReference type="CTD" id="27032"/>
<dbReference type="MGI" id="MGI:1889008">
    <property type="gene designation" value="Atp2c1"/>
</dbReference>
<dbReference type="VEuPathDB" id="HostDB:ENSMUSG00000032570"/>
<dbReference type="eggNOG" id="KOG0202">
    <property type="taxonomic scope" value="Eukaryota"/>
</dbReference>
<dbReference type="GeneTree" id="ENSGT00940000156421"/>
<dbReference type="InParanoid" id="Q80XR2"/>
<dbReference type="OMA" id="KMHACET"/>
<dbReference type="OrthoDB" id="3352408at2759"/>
<dbReference type="TreeFam" id="TF354251"/>
<dbReference type="Reactome" id="R-MMU-936837">
    <property type="pathway name" value="Ion transport by P-type ATPases"/>
</dbReference>
<dbReference type="BioGRID-ORCS" id="235574">
    <property type="hits" value="4 hits in 80 CRISPR screens"/>
</dbReference>
<dbReference type="ChiTaRS" id="Atp2c1">
    <property type="organism name" value="mouse"/>
</dbReference>
<dbReference type="PRO" id="PR:Q80XR2"/>
<dbReference type="Proteomes" id="UP000000589">
    <property type="component" value="Chromosome 9"/>
</dbReference>
<dbReference type="RNAct" id="Q80XR2">
    <property type="molecule type" value="protein"/>
</dbReference>
<dbReference type="Bgee" id="ENSMUSG00000032570">
    <property type="expression patterns" value="Expressed in secondary oocyte and 262 other cell types or tissues"/>
</dbReference>
<dbReference type="ExpressionAtlas" id="Q80XR2">
    <property type="expression patterns" value="baseline and differential"/>
</dbReference>
<dbReference type="GO" id="GO:0033106">
    <property type="term" value="C:cis-Golgi network membrane"/>
    <property type="evidence" value="ECO:0000314"/>
    <property type="project" value="UniProtKB"/>
</dbReference>
<dbReference type="GO" id="GO:0005794">
    <property type="term" value="C:Golgi apparatus"/>
    <property type="evidence" value="ECO:0000314"/>
    <property type="project" value="MGI"/>
</dbReference>
<dbReference type="GO" id="GO:0032580">
    <property type="term" value="C:Golgi cisterna membrane"/>
    <property type="evidence" value="ECO:0000314"/>
    <property type="project" value="UniProtKB"/>
</dbReference>
<dbReference type="GO" id="GO:0000139">
    <property type="term" value="C:Golgi membrane"/>
    <property type="evidence" value="ECO:0000250"/>
    <property type="project" value="UniProtKB"/>
</dbReference>
<dbReference type="GO" id="GO:0016020">
    <property type="term" value="C:membrane"/>
    <property type="evidence" value="ECO:0000304"/>
    <property type="project" value="MGI"/>
</dbReference>
<dbReference type="GO" id="GO:0005802">
    <property type="term" value="C:trans-Golgi network"/>
    <property type="evidence" value="ECO:0000250"/>
    <property type="project" value="UniProtKB"/>
</dbReference>
<dbReference type="GO" id="GO:0005524">
    <property type="term" value="F:ATP binding"/>
    <property type="evidence" value="ECO:0000250"/>
    <property type="project" value="UniProtKB"/>
</dbReference>
<dbReference type="GO" id="GO:0016887">
    <property type="term" value="F:ATP hydrolysis activity"/>
    <property type="evidence" value="ECO:0007669"/>
    <property type="project" value="InterPro"/>
</dbReference>
<dbReference type="GO" id="GO:0005509">
    <property type="term" value="F:calcium ion binding"/>
    <property type="evidence" value="ECO:0000250"/>
    <property type="project" value="UniProtKB"/>
</dbReference>
<dbReference type="GO" id="GO:0030145">
    <property type="term" value="F:manganese ion binding"/>
    <property type="evidence" value="ECO:0000250"/>
    <property type="project" value="UniProtKB"/>
</dbReference>
<dbReference type="GO" id="GO:0005388">
    <property type="term" value="F:P-type calcium transporter activity"/>
    <property type="evidence" value="ECO:0000250"/>
    <property type="project" value="UniProtKB"/>
</dbReference>
<dbReference type="GO" id="GO:0140613">
    <property type="term" value="F:P-type manganese transporter activity"/>
    <property type="evidence" value="ECO:0000250"/>
    <property type="project" value="UniProtKB"/>
</dbReference>
<dbReference type="GO" id="GO:0030036">
    <property type="term" value="P:actin cytoskeleton organization"/>
    <property type="evidence" value="ECO:0000250"/>
    <property type="project" value="UniProtKB"/>
</dbReference>
<dbReference type="GO" id="GO:0006816">
    <property type="term" value="P:calcium ion transport"/>
    <property type="evidence" value="ECO:0000250"/>
    <property type="project" value="UniProtKB"/>
</dbReference>
<dbReference type="GO" id="GO:0016339">
    <property type="term" value="P:calcium-dependent cell-cell adhesion via plasma membrane cell adhesion molecules"/>
    <property type="evidence" value="ECO:0000250"/>
    <property type="project" value="UniProtKB"/>
</dbReference>
<dbReference type="GO" id="GO:0008544">
    <property type="term" value="P:epidermis development"/>
    <property type="evidence" value="ECO:0000250"/>
    <property type="project" value="UniProtKB"/>
</dbReference>
<dbReference type="GO" id="GO:0032468">
    <property type="term" value="P:Golgi calcium ion homeostasis"/>
    <property type="evidence" value="ECO:0000315"/>
    <property type="project" value="UniProtKB"/>
</dbReference>
<dbReference type="GO" id="GO:0032472">
    <property type="term" value="P:Golgi calcium ion transport"/>
    <property type="evidence" value="ECO:0000250"/>
    <property type="project" value="UniProtKB"/>
</dbReference>
<dbReference type="GO" id="GO:0006874">
    <property type="term" value="P:intracellular calcium ion homeostasis"/>
    <property type="evidence" value="ECO:0000250"/>
    <property type="project" value="UniProtKB"/>
</dbReference>
<dbReference type="GO" id="GO:0030026">
    <property type="term" value="P:intracellular manganese ion homeostasis"/>
    <property type="evidence" value="ECO:0000250"/>
    <property type="project" value="UniProtKB"/>
</dbReference>
<dbReference type="GO" id="GO:0006828">
    <property type="term" value="P:manganese ion transport"/>
    <property type="evidence" value="ECO:0000250"/>
    <property type="project" value="UniProtKB"/>
</dbReference>
<dbReference type="GO" id="GO:0043123">
    <property type="term" value="P:positive regulation of canonical NF-kappaB signal transduction"/>
    <property type="evidence" value="ECO:0000250"/>
    <property type="project" value="UniProtKB"/>
</dbReference>
<dbReference type="GO" id="GO:0042998">
    <property type="term" value="P:positive regulation of Golgi to plasma membrane protein transport"/>
    <property type="evidence" value="ECO:0000315"/>
    <property type="project" value="UniProtKB"/>
</dbReference>
<dbReference type="GO" id="GO:0098629">
    <property type="term" value="P:trans-Golgi network membrane organization"/>
    <property type="evidence" value="ECO:0000250"/>
    <property type="project" value="UniProtKB"/>
</dbReference>
<dbReference type="CDD" id="cd02085">
    <property type="entry name" value="P-type_ATPase_SPCA"/>
    <property type="match status" value="1"/>
</dbReference>
<dbReference type="FunFam" id="2.70.150.10:FF:000008">
    <property type="entry name" value="Calcium-transporting ATPase"/>
    <property type="match status" value="1"/>
</dbReference>
<dbReference type="FunFam" id="3.40.1110.10:FF:000006">
    <property type="entry name" value="Calcium-transporting ATPase"/>
    <property type="match status" value="1"/>
</dbReference>
<dbReference type="FunFam" id="3.40.50.1000:FF:000017">
    <property type="entry name" value="Calcium-transporting ATPase"/>
    <property type="match status" value="1"/>
</dbReference>
<dbReference type="FunFam" id="3.40.50.1000:FF:000001">
    <property type="entry name" value="Phospholipid-transporting ATPase IC"/>
    <property type="match status" value="1"/>
</dbReference>
<dbReference type="Gene3D" id="3.40.1110.10">
    <property type="entry name" value="Calcium-transporting ATPase, cytoplasmic domain N"/>
    <property type="match status" value="1"/>
</dbReference>
<dbReference type="Gene3D" id="2.70.150.10">
    <property type="entry name" value="Calcium-transporting ATPase, cytoplasmic transduction domain A"/>
    <property type="match status" value="1"/>
</dbReference>
<dbReference type="Gene3D" id="1.20.1110.10">
    <property type="entry name" value="Calcium-transporting ATPase, transmembrane domain"/>
    <property type="match status" value="1"/>
</dbReference>
<dbReference type="Gene3D" id="3.40.50.1000">
    <property type="entry name" value="HAD superfamily/HAD-like"/>
    <property type="match status" value="1"/>
</dbReference>
<dbReference type="InterPro" id="IPR006068">
    <property type="entry name" value="ATPase_P-typ_cation-transptr_C"/>
</dbReference>
<dbReference type="InterPro" id="IPR004014">
    <property type="entry name" value="ATPase_P-typ_cation-transptr_N"/>
</dbReference>
<dbReference type="InterPro" id="IPR023299">
    <property type="entry name" value="ATPase_P-typ_cyto_dom_N"/>
</dbReference>
<dbReference type="InterPro" id="IPR018303">
    <property type="entry name" value="ATPase_P-typ_P_site"/>
</dbReference>
<dbReference type="InterPro" id="IPR023298">
    <property type="entry name" value="ATPase_P-typ_TM_dom_sf"/>
</dbReference>
<dbReference type="InterPro" id="IPR008250">
    <property type="entry name" value="ATPase_P-typ_transduc_dom_A_sf"/>
</dbReference>
<dbReference type="InterPro" id="IPR036412">
    <property type="entry name" value="HAD-like_sf"/>
</dbReference>
<dbReference type="InterPro" id="IPR023214">
    <property type="entry name" value="HAD_sf"/>
</dbReference>
<dbReference type="InterPro" id="IPR006413">
    <property type="entry name" value="P-type_ATPase_IIA_PMR1"/>
</dbReference>
<dbReference type="InterPro" id="IPR001757">
    <property type="entry name" value="P_typ_ATPase"/>
</dbReference>
<dbReference type="InterPro" id="IPR044492">
    <property type="entry name" value="P_typ_ATPase_HD_dom"/>
</dbReference>
<dbReference type="NCBIfam" id="TIGR01522">
    <property type="entry name" value="ATPase-IIA2_Ca"/>
    <property type="match status" value="1"/>
</dbReference>
<dbReference type="NCBIfam" id="TIGR01494">
    <property type="entry name" value="ATPase_P-type"/>
    <property type="match status" value="2"/>
</dbReference>
<dbReference type="PANTHER" id="PTHR42861">
    <property type="entry name" value="CALCIUM-TRANSPORTING ATPASE"/>
    <property type="match status" value="1"/>
</dbReference>
<dbReference type="Pfam" id="PF13246">
    <property type="entry name" value="Cation_ATPase"/>
    <property type="match status" value="1"/>
</dbReference>
<dbReference type="Pfam" id="PF00689">
    <property type="entry name" value="Cation_ATPase_C"/>
    <property type="match status" value="1"/>
</dbReference>
<dbReference type="Pfam" id="PF00690">
    <property type="entry name" value="Cation_ATPase_N"/>
    <property type="match status" value="1"/>
</dbReference>
<dbReference type="Pfam" id="PF00122">
    <property type="entry name" value="E1-E2_ATPase"/>
    <property type="match status" value="1"/>
</dbReference>
<dbReference type="PRINTS" id="PR00119">
    <property type="entry name" value="CATATPASE"/>
</dbReference>
<dbReference type="PRINTS" id="PR00120">
    <property type="entry name" value="HATPASE"/>
</dbReference>
<dbReference type="SFLD" id="SFLDG00002">
    <property type="entry name" value="C1.7:_P-type_atpase_like"/>
    <property type="match status" value="1"/>
</dbReference>
<dbReference type="SFLD" id="SFLDF00027">
    <property type="entry name" value="p-type_atpase"/>
    <property type="match status" value="1"/>
</dbReference>
<dbReference type="SMART" id="SM00831">
    <property type="entry name" value="Cation_ATPase_N"/>
    <property type="match status" value="1"/>
</dbReference>
<dbReference type="SUPFAM" id="SSF81653">
    <property type="entry name" value="Calcium ATPase, transduction domain A"/>
    <property type="match status" value="1"/>
</dbReference>
<dbReference type="SUPFAM" id="SSF81665">
    <property type="entry name" value="Calcium ATPase, transmembrane domain M"/>
    <property type="match status" value="1"/>
</dbReference>
<dbReference type="SUPFAM" id="SSF56784">
    <property type="entry name" value="HAD-like"/>
    <property type="match status" value="1"/>
</dbReference>
<dbReference type="SUPFAM" id="SSF81660">
    <property type="entry name" value="Metal cation-transporting ATPase, ATP-binding domain N"/>
    <property type="match status" value="1"/>
</dbReference>
<dbReference type="PROSITE" id="PS00154">
    <property type="entry name" value="ATPASE_E1_E2"/>
    <property type="match status" value="1"/>
</dbReference>
<gene>
    <name evidence="6 8" type="primary">Atp2c1</name>
    <name type="synonym">Pmr1</name>
</gene>
<feature type="chain" id="PRO_0000046224" description="Calcium-transporting ATPase type 2C member 1">
    <location>
        <begin position="1"/>
        <end position="918"/>
    </location>
</feature>
<feature type="topological domain" description="Cytoplasmic" evidence="3">
    <location>
        <begin position="1"/>
        <end position="78"/>
    </location>
</feature>
<feature type="transmembrane region" description="Helical" evidence="3">
    <location>
        <begin position="79"/>
        <end position="95"/>
    </location>
</feature>
<feature type="topological domain" description="Extracellular" evidence="3">
    <location>
        <begin position="96"/>
        <end position="99"/>
    </location>
</feature>
<feature type="transmembrane region" description="Helical" evidence="3">
    <location>
        <begin position="100"/>
        <end position="121"/>
    </location>
</feature>
<feature type="topological domain" description="Cytoplasmic" evidence="3">
    <location>
        <begin position="122"/>
        <end position="262"/>
    </location>
</feature>
<feature type="transmembrane region" description="Helical" evidence="3">
    <location>
        <begin position="263"/>
        <end position="282"/>
    </location>
</feature>
<feature type="topological domain" description="Extracellular" evidence="3">
    <location>
        <begin position="283"/>
        <end position="294"/>
    </location>
</feature>
<feature type="transmembrane region" description="Helical" evidence="3">
    <location>
        <begin position="295"/>
        <end position="316"/>
    </location>
</feature>
<feature type="topological domain" description="Cytoplasmic" evidence="3">
    <location>
        <begin position="317"/>
        <end position="699"/>
    </location>
</feature>
<feature type="transmembrane region" description="Helical" evidence="3">
    <location>
        <begin position="700"/>
        <end position="722"/>
    </location>
</feature>
<feature type="topological domain" description="Extracellular" evidence="3">
    <location>
        <begin position="723"/>
        <end position="727"/>
    </location>
</feature>
<feature type="transmembrane region" description="Helical" evidence="3">
    <location>
        <begin position="728"/>
        <end position="751"/>
    </location>
</feature>
<feature type="topological domain" description="Cytoplasmic" evidence="3">
    <location>
        <begin position="752"/>
        <end position="775"/>
    </location>
</feature>
<feature type="transmembrane region" description="Helical" evidence="3">
    <location>
        <begin position="776"/>
        <end position="794"/>
    </location>
</feature>
<feature type="topological domain" description="Extracellular" evidence="3">
    <location>
        <begin position="795"/>
        <end position="801"/>
    </location>
</feature>
<feature type="transmembrane region" description="Helical" evidence="3">
    <location>
        <begin position="802"/>
        <end position="827"/>
    </location>
</feature>
<feature type="topological domain" description="Cytoplasmic" evidence="3">
    <location>
        <begin position="828"/>
        <end position="842"/>
    </location>
</feature>
<feature type="transmembrane region" description="Helical" evidence="3">
    <location>
        <begin position="843"/>
        <end position="862"/>
    </location>
</feature>
<feature type="topological domain" description="Extracellular" evidence="3">
    <location>
        <begin position="863"/>
        <end position="875"/>
    </location>
</feature>
<feature type="transmembrane region" description="Helical" evidence="3">
    <location>
        <begin position="876"/>
        <end position="892"/>
    </location>
</feature>
<feature type="topological domain" description="Cytoplasmic" evidence="3">
    <location>
        <begin position="893"/>
        <end position="918"/>
    </location>
</feature>
<feature type="active site" description="4-aspartylphosphate intermediate" evidence="1">
    <location>
        <position position="349"/>
    </location>
</feature>
<feature type="binding site" evidence="1">
    <location>
        <position position="643"/>
    </location>
    <ligand>
        <name>Mg(2+)</name>
        <dbReference type="ChEBI" id="CHEBI:18420"/>
    </ligand>
</feature>
<feature type="binding site" evidence="1">
    <location>
        <position position="647"/>
    </location>
    <ligand>
        <name>Mg(2+)</name>
        <dbReference type="ChEBI" id="CHEBI:18420"/>
    </ligand>
</feature>
<feature type="sequence conflict" description="In Ref. 1; CAD82864." evidence="7" ref="1">
    <original>V</original>
    <variation>A</variation>
    <location>
        <position position="156"/>
    </location>
</feature>
<feature type="sequence conflict" description="In Ref. 3; AAH43091." evidence="7" ref="3">
    <original>T</original>
    <variation>I</variation>
    <location>
        <position position="189"/>
    </location>
</feature>
<feature type="sequence conflict" description="In Ref. 1; CAD82864." evidence="7" ref="1">
    <original>F</original>
    <variation>S</variation>
    <location>
        <position position="217"/>
    </location>
</feature>
<feature type="sequence conflict" description="In Ref. 1; CAD82864." evidence="7" ref="1">
    <original>M</original>
    <variation>T</variation>
    <location>
        <position position="280"/>
    </location>
</feature>
<feature type="sequence conflict" description="In Ref. 3; AAH43091." evidence="7" ref="3">
    <original>P</original>
    <variation>S</variation>
    <location>
        <position position="743"/>
    </location>
</feature>
<feature type="sequence conflict" description="In Ref. 1; CAD82864." evidence="7" ref="1">
    <original>C</original>
    <variation>R</variation>
    <location>
        <position position="813"/>
    </location>
</feature>
<feature type="sequence conflict" description="In Ref. 1; CAD82864." evidence="7" ref="1">
    <original>E</original>
    <variation>G</variation>
    <location>
        <position position="902"/>
    </location>
</feature>
<comment type="function">
    <text evidence="2 5">ATP-driven pump that supplies the Golgi apparatus with Ca(2+) and Mn(2+) ions, both essential cofactors for processing and trafficking of newly synthesized proteins in the secretory pathway (By similarity). Within a catalytic cycle, acquires Ca(2+) or Mn(2+) ions on the cytoplasmic side of the membrane and delivers them to the lumenal side. The transfer of ions across the membrane is coupled to ATP hydrolysis and is associated with a transient phosphorylation that shifts the pump conformation from inward-facing to outward-facing state (By similarity). Plays a primary role in the maintenance of Ca(2+) homeostasis in the trans-Golgi compartment with a functional impact on Golgi and post-Golgi protein sorting as well as a structural impact on cisternae morphology. Responsible for loading the Golgi stores with Ca(2+) ions in keratinocytes, contributing to keratinocyte differentiation and epidermis integrity (By similarity). Participates in Ca(2+) and Mn(2+) ions uptake into the Golgi store of hippocampal neurons and regulates protein trafficking required for neural polarity (PubMed:19793975). May also play a role in the maintenance of Ca(2+) and Mn(2+) homeostasis and signaling in the cytosol while preventing cytotoxicity (By similarity).</text>
</comment>
<comment type="catalytic activity">
    <reaction evidence="2">
        <text>Ca(2+)(in) + ATP + H2O = Ca(2+)(out) + ADP + phosphate + H(+)</text>
        <dbReference type="Rhea" id="RHEA:18105"/>
        <dbReference type="ChEBI" id="CHEBI:15377"/>
        <dbReference type="ChEBI" id="CHEBI:15378"/>
        <dbReference type="ChEBI" id="CHEBI:29108"/>
        <dbReference type="ChEBI" id="CHEBI:30616"/>
        <dbReference type="ChEBI" id="CHEBI:43474"/>
        <dbReference type="ChEBI" id="CHEBI:456216"/>
        <dbReference type="EC" id="7.2.2.10"/>
    </reaction>
    <physiologicalReaction direction="left-to-right" evidence="2">
        <dbReference type="Rhea" id="RHEA:18106"/>
    </physiologicalReaction>
</comment>
<comment type="catalytic activity">
    <reaction evidence="2">
        <text>Mn(2+)(in) + ATP + H2O = Mn(2+)(out) + ADP + phosphate + H(+)</text>
        <dbReference type="Rhea" id="RHEA:66820"/>
        <dbReference type="ChEBI" id="CHEBI:15377"/>
        <dbReference type="ChEBI" id="CHEBI:15378"/>
        <dbReference type="ChEBI" id="CHEBI:29035"/>
        <dbReference type="ChEBI" id="CHEBI:30616"/>
        <dbReference type="ChEBI" id="CHEBI:43474"/>
        <dbReference type="ChEBI" id="CHEBI:456216"/>
    </reaction>
    <physiologicalReaction direction="left-to-right" evidence="2">
        <dbReference type="Rhea" id="RHEA:66821"/>
    </physiologicalReaction>
</comment>
<comment type="subunit">
    <text evidence="2">Monomer. Homodimer.</text>
</comment>
<comment type="subcellular location">
    <subcellularLocation>
        <location evidence="2">Golgi apparatus</location>
        <location evidence="2">trans-Golgi network membrane</location>
        <topology evidence="3">Multi-pass membrane protein</topology>
    </subcellularLocation>
    <subcellularLocation>
        <location evidence="5">Golgi apparatus</location>
        <location evidence="5">Golgi stack membrane</location>
        <topology evidence="3">Multi-pass membrane protein</topology>
    </subcellularLocation>
    <text evidence="5">During neuron differentiation, shifts from juxtanuclear Golgi position to multiple Golgi structures distributed over the neural soma with a predominance in the apical dendritic trunk.</text>
</comment>
<comment type="tissue specificity">
    <text evidence="4 5">Expressed in hippocampal neurons in the CA3 region of the Amon's horn (at protein level) (PubMed:19793975). Expressed in brain, heart, lung, stomach, liver, colon and mammary gland (PubMed:17597066).</text>
</comment>
<comment type="disruption phenotype">
    <text evidence="4">Mutant mice, born at the expected Mendelian rate, show growth retardation and exencephaly by 9.5 dpc and die by 10.5 dpc.</text>
</comment>
<comment type="similarity">
    <text evidence="7">Belongs to the cation transport ATPase (P-type) (TC 3.A.3) family. Type IIA subfamily.</text>
</comment>
<organism>
    <name type="scientific">Mus musculus</name>
    <name type="common">Mouse</name>
    <dbReference type="NCBI Taxonomy" id="10090"/>
    <lineage>
        <taxon>Eukaryota</taxon>
        <taxon>Metazoa</taxon>
        <taxon>Chordata</taxon>
        <taxon>Craniata</taxon>
        <taxon>Vertebrata</taxon>
        <taxon>Euteleostomi</taxon>
        <taxon>Mammalia</taxon>
        <taxon>Eutheria</taxon>
        <taxon>Euarchontoglires</taxon>
        <taxon>Glires</taxon>
        <taxon>Rodentia</taxon>
        <taxon>Myomorpha</taxon>
        <taxon>Muroidea</taxon>
        <taxon>Muridae</taxon>
        <taxon>Murinae</taxon>
        <taxon>Mus</taxon>
        <taxon>Mus</taxon>
    </lineage>
</organism>
<keyword id="KW-0067">ATP-binding</keyword>
<keyword id="KW-0106">Calcium</keyword>
<keyword id="KW-0109">Calcium transport</keyword>
<keyword id="KW-0903">Direct protein sequencing</keyword>
<keyword id="KW-0333">Golgi apparatus</keyword>
<keyword id="KW-0406">Ion transport</keyword>
<keyword id="KW-0460">Magnesium</keyword>
<keyword id="KW-0472">Membrane</keyword>
<keyword id="KW-0479">Metal-binding</keyword>
<keyword id="KW-0547">Nucleotide-binding</keyword>
<keyword id="KW-1185">Reference proteome</keyword>
<keyword id="KW-1278">Translocase</keyword>
<keyword id="KW-0812">Transmembrane</keyword>
<keyword id="KW-1133">Transmembrane helix</keyword>
<keyword id="KW-0813">Transport</keyword>
<proteinExistence type="evidence at protein level"/>